<sequence>MVREKITVSTRTLQWKCVESAADSKRLLYGRFILSPLMKGQADTIGIAMRRALLGEIEGTCITRAKSEKISHEYSTIMGIQESVHEILMNLKEIVLRSNLYGTCEASICVRGPGYVTAQDIILPPYVEILDNTQHIASLTEPIELVIGLQIEKNRGYLIKAPNTFQDGSYPIDPVFMPVRNANHSIHSYENGNKEILFLEIWTNGSLTPKEALYEASRNLIDLLIPFLHTKEENLNLEGNQHMVPLPPFTFYDKLAKLTKNKKKMALKSIFIDQSELPPRIYNCLKRSNIYTLLDLLNNSQEDLMKMEHFRIEDVKQILGILEKNFVIDLPKNKF</sequence>
<feature type="chain" id="PRO_0000225922" description="DNA-directed RNA polymerase subunit alpha">
    <location>
        <begin position="1"/>
        <end position="335"/>
    </location>
</feature>
<feature type="region of interest" description="Alpha N-terminal domain (alpha-NTD)" evidence="1">
    <location>
        <begin position="1"/>
        <end position="231"/>
    </location>
</feature>
<feature type="region of interest" description="Alpha C-terminal domain (alpha-CTD)" evidence="1">
    <location>
        <begin position="263"/>
        <end position="335"/>
    </location>
</feature>
<accession>Q332U5</accession>
<accession>Q1KXJ0</accession>
<organism>
    <name type="scientific">Lactuca sativa</name>
    <name type="common">Garden lettuce</name>
    <dbReference type="NCBI Taxonomy" id="4236"/>
    <lineage>
        <taxon>Eukaryota</taxon>
        <taxon>Viridiplantae</taxon>
        <taxon>Streptophyta</taxon>
        <taxon>Embryophyta</taxon>
        <taxon>Tracheophyta</taxon>
        <taxon>Spermatophyta</taxon>
        <taxon>Magnoliopsida</taxon>
        <taxon>eudicotyledons</taxon>
        <taxon>Gunneridae</taxon>
        <taxon>Pentapetalae</taxon>
        <taxon>asterids</taxon>
        <taxon>campanulids</taxon>
        <taxon>Asterales</taxon>
        <taxon>Asteraceae</taxon>
        <taxon>Cichorioideae</taxon>
        <taxon>Cichorieae</taxon>
        <taxon>Lactucinae</taxon>
        <taxon>Lactuca</taxon>
    </lineage>
</organism>
<keyword id="KW-0150">Chloroplast</keyword>
<keyword id="KW-0240">DNA-directed RNA polymerase</keyword>
<keyword id="KW-0548">Nucleotidyltransferase</keyword>
<keyword id="KW-0934">Plastid</keyword>
<keyword id="KW-0804">Transcription</keyword>
<keyword id="KW-0808">Transferase</keyword>
<geneLocation type="chloroplast"/>
<evidence type="ECO:0000255" key="1">
    <source>
        <dbReference type="HAMAP-Rule" id="MF_00059"/>
    </source>
</evidence>
<evidence type="ECO:0000305" key="2"/>
<name>RPOA_LACSA</name>
<protein>
    <recommendedName>
        <fullName evidence="1">DNA-directed RNA polymerase subunit alpha</fullName>
        <shortName evidence="1">PEP</shortName>
        <ecNumber evidence="1">2.7.7.6</ecNumber>
    </recommendedName>
    <alternativeName>
        <fullName evidence="1">Plastid-encoded RNA polymerase subunit alpha</fullName>
        <shortName evidence="1">RNA polymerase subunit alpha</shortName>
    </alternativeName>
</protein>
<comment type="function">
    <text evidence="1">DNA-dependent RNA polymerase catalyzes the transcription of DNA into RNA using the four ribonucleoside triphosphates as substrates.</text>
</comment>
<comment type="catalytic activity">
    <reaction evidence="1">
        <text>RNA(n) + a ribonucleoside 5'-triphosphate = RNA(n+1) + diphosphate</text>
        <dbReference type="Rhea" id="RHEA:21248"/>
        <dbReference type="Rhea" id="RHEA-COMP:14527"/>
        <dbReference type="Rhea" id="RHEA-COMP:17342"/>
        <dbReference type="ChEBI" id="CHEBI:33019"/>
        <dbReference type="ChEBI" id="CHEBI:61557"/>
        <dbReference type="ChEBI" id="CHEBI:140395"/>
        <dbReference type="EC" id="2.7.7.6"/>
    </reaction>
</comment>
<comment type="subunit">
    <text evidence="1">In plastids the minimal PEP RNA polymerase catalytic core is composed of four subunits: alpha, beta, beta', and beta''. When a (nuclear-encoded) sigma factor is associated with the core the holoenzyme is formed, which can initiate transcription.</text>
</comment>
<comment type="subcellular location">
    <subcellularLocation>
        <location>Plastid</location>
        <location>Chloroplast</location>
    </subcellularLocation>
</comment>
<comment type="domain">
    <text evidence="1">The N-terminal domain is essential for RNAP assembly and basal transcription, whereas the C-terminal domain is involved in interaction with transcriptional regulators and with upstream promoter elements.</text>
</comment>
<comment type="similarity">
    <text evidence="1">Belongs to the RNA polymerase alpha chain family.</text>
</comment>
<comment type="sequence caution" evidence="2">
    <conflict type="erroneous initiation">
        <sequence resource="EMBL-CDS" id="ABD47264"/>
    </conflict>
</comment>
<gene>
    <name evidence="1" type="primary">rpoA</name>
</gene>
<dbReference type="EC" id="2.7.7.6" evidence="1"/>
<dbReference type="EMBL" id="AP007232">
    <property type="protein sequence ID" value="BAE47627.1"/>
    <property type="molecule type" value="Genomic_DNA"/>
</dbReference>
<dbReference type="EMBL" id="DQ383816">
    <property type="protein sequence ID" value="ABD47264.1"/>
    <property type="status" value="ALT_INIT"/>
    <property type="molecule type" value="Genomic_DNA"/>
</dbReference>
<dbReference type="RefSeq" id="YP_398360.1">
    <property type="nucleotide sequence ID" value="NC_007578.1"/>
</dbReference>
<dbReference type="SMR" id="Q332U5"/>
<dbReference type="GeneID" id="3772822"/>
<dbReference type="KEGG" id="lsv:3772822"/>
<dbReference type="OrthoDB" id="360088at2759"/>
<dbReference type="GO" id="GO:0009507">
    <property type="term" value="C:chloroplast"/>
    <property type="evidence" value="ECO:0007669"/>
    <property type="project" value="UniProtKB-SubCell"/>
</dbReference>
<dbReference type="GO" id="GO:0000428">
    <property type="term" value="C:DNA-directed RNA polymerase complex"/>
    <property type="evidence" value="ECO:0007669"/>
    <property type="project" value="UniProtKB-KW"/>
</dbReference>
<dbReference type="GO" id="GO:0005739">
    <property type="term" value="C:mitochondrion"/>
    <property type="evidence" value="ECO:0007669"/>
    <property type="project" value="GOC"/>
</dbReference>
<dbReference type="GO" id="GO:0003677">
    <property type="term" value="F:DNA binding"/>
    <property type="evidence" value="ECO:0007669"/>
    <property type="project" value="UniProtKB-UniRule"/>
</dbReference>
<dbReference type="GO" id="GO:0003899">
    <property type="term" value="F:DNA-directed RNA polymerase activity"/>
    <property type="evidence" value="ECO:0007669"/>
    <property type="project" value="UniProtKB-UniRule"/>
</dbReference>
<dbReference type="GO" id="GO:0046983">
    <property type="term" value="F:protein dimerization activity"/>
    <property type="evidence" value="ECO:0007669"/>
    <property type="project" value="InterPro"/>
</dbReference>
<dbReference type="GO" id="GO:0006351">
    <property type="term" value="P:DNA-templated transcription"/>
    <property type="evidence" value="ECO:0007669"/>
    <property type="project" value="UniProtKB-UniRule"/>
</dbReference>
<dbReference type="CDD" id="cd06928">
    <property type="entry name" value="RNAP_alpha_NTD"/>
    <property type="match status" value="1"/>
</dbReference>
<dbReference type="FunFam" id="1.10.150.20:FF:000021">
    <property type="entry name" value="DNA-directed RNA polymerase subunit alpha"/>
    <property type="match status" value="1"/>
</dbReference>
<dbReference type="FunFam" id="2.170.120.12:FF:000001">
    <property type="entry name" value="DNA-directed RNA polymerase subunit alpha"/>
    <property type="match status" value="1"/>
</dbReference>
<dbReference type="FunFam" id="3.30.1360.10:FF:000039">
    <property type="entry name" value="DNA-directed RNA polymerase subunit alpha"/>
    <property type="match status" value="1"/>
</dbReference>
<dbReference type="Gene3D" id="1.10.150.20">
    <property type="entry name" value="5' to 3' exonuclease, C-terminal subdomain"/>
    <property type="match status" value="1"/>
</dbReference>
<dbReference type="Gene3D" id="2.170.120.12">
    <property type="entry name" value="DNA-directed RNA polymerase, insert domain"/>
    <property type="match status" value="1"/>
</dbReference>
<dbReference type="Gene3D" id="3.30.1360.10">
    <property type="entry name" value="RNA polymerase, RBP11-like subunit"/>
    <property type="match status" value="1"/>
</dbReference>
<dbReference type="HAMAP" id="MF_00059">
    <property type="entry name" value="RNApol_bact_RpoA"/>
    <property type="match status" value="1"/>
</dbReference>
<dbReference type="InterPro" id="IPR011262">
    <property type="entry name" value="DNA-dir_RNA_pol_insert"/>
</dbReference>
<dbReference type="InterPro" id="IPR011263">
    <property type="entry name" value="DNA-dir_RNA_pol_RpoA/D/Rpb3"/>
</dbReference>
<dbReference type="InterPro" id="IPR011773">
    <property type="entry name" value="DNA-dir_RpoA"/>
</dbReference>
<dbReference type="InterPro" id="IPR036603">
    <property type="entry name" value="RBP11-like"/>
</dbReference>
<dbReference type="InterPro" id="IPR011260">
    <property type="entry name" value="RNAP_asu_C"/>
</dbReference>
<dbReference type="InterPro" id="IPR036643">
    <property type="entry name" value="RNApol_insert_sf"/>
</dbReference>
<dbReference type="NCBIfam" id="TIGR02027">
    <property type="entry name" value="rpoA"/>
    <property type="match status" value="1"/>
</dbReference>
<dbReference type="Pfam" id="PF01000">
    <property type="entry name" value="RNA_pol_A_bac"/>
    <property type="match status" value="1"/>
</dbReference>
<dbReference type="Pfam" id="PF03118">
    <property type="entry name" value="RNA_pol_A_CTD"/>
    <property type="match status" value="1"/>
</dbReference>
<dbReference type="Pfam" id="PF01193">
    <property type="entry name" value="RNA_pol_L"/>
    <property type="match status" value="1"/>
</dbReference>
<dbReference type="SMART" id="SM00662">
    <property type="entry name" value="RPOLD"/>
    <property type="match status" value="1"/>
</dbReference>
<dbReference type="SUPFAM" id="SSF47789">
    <property type="entry name" value="C-terminal domain of RNA polymerase alpha subunit"/>
    <property type="match status" value="1"/>
</dbReference>
<dbReference type="SUPFAM" id="SSF56553">
    <property type="entry name" value="Insert subdomain of RNA polymerase alpha subunit"/>
    <property type="match status" value="1"/>
</dbReference>
<dbReference type="SUPFAM" id="SSF55257">
    <property type="entry name" value="RBP11-like subunits of RNA polymerase"/>
    <property type="match status" value="1"/>
</dbReference>
<proteinExistence type="inferred from homology"/>
<reference key="1">
    <citation type="journal article" date="2006" name="Transgenic Res.">
        <title>Efficient and stable transformation of Lactuca sativa L. cv. Cisco (lettuce) plastids.</title>
        <authorList>
            <person name="Kanamoto H."/>
            <person name="Yamashita A."/>
            <person name="Asao H."/>
            <person name="Okumura S."/>
            <person name="Takase H."/>
            <person name="Hattori M."/>
            <person name="Yokota A."/>
            <person name="Tomizawa K."/>
        </authorList>
    </citation>
    <scope>NUCLEOTIDE SEQUENCE [LARGE SCALE GENOMIC DNA]</scope>
    <source>
        <strain>cv. Cisco</strain>
    </source>
</reference>
<reference key="2">
    <citation type="submission" date="2006-01" db="EMBL/GenBank/DDBJ databases">
        <title>A comparison of the first two published chloroplast genomes in Asteraceae: Lactuca and Helianthus.</title>
        <authorList>
            <person name="Timme R.E."/>
            <person name="Kuehl J.V."/>
            <person name="Boore J.L."/>
            <person name="Jansen R.K."/>
        </authorList>
    </citation>
    <scope>NUCLEOTIDE SEQUENCE [LARGE SCALE GENOMIC DNA]</scope>
    <source>
        <strain>cv. Salinas</strain>
    </source>
</reference>